<gene>
    <name evidence="1" type="primary">purH</name>
    <name type="ordered locus">lwe1783</name>
</gene>
<organism>
    <name type="scientific">Listeria welshimeri serovar 6b (strain ATCC 35897 / DSM 20650 / CCUG 15529 / CIP 8149 / NCTC 11857 / SLCC 5334 / V8)</name>
    <dbReference type="NCBI Taxonomy" id="386043"/>
    <lineage>
        <taxon>Bacteria</taxon>
        <taxon>Bacillati</taxon>
        <taxon>Bacillota</taxon>
        <taxon>Bacilli</taxon>
        <taxon>Bacillales</taxon>
        <taxon>Listeriaceae</taxon>
        <taxon>Listeria</taxon>
    </lineage>
</organism>
<proteinExistence type="inferred from homology"/>
<feature type="chain" id="PRO_1000018907" description="Bifunctional purine biosynthesis protein PurH">
    <location>
        <begin position="1"/>
        <end position="509"/>
    </location>
</feature>
<feature type="domain" description="MGS-like" evidence="2">
    <location>
        <begin position="1"/>
        <end position="144"/>
    </location>
</feature>
<reference key="1">
    <citation type="journal article" date="2006" name="J. Bacteriol.">
        <title>Whole-genome sequence of Listeria welshimeri reveals common steps in genome reduction with Listeria innocua as compared to Listeria monocytogenes.</title>
        <authorList>
            <person name="Hain T."/>
            <person name="Steinweg C."/>
            <person name="Kuenne C.T."/>
            <person name="Billion A."/>
            <person name="Ghai R."/>
            <person name="Chatterjee S.S."/>
            <person name="Domann E."/>
            <person name="Kaerst U."/>
            <person name="Goesmann A."/>
            <person name="Bekel T."/>
            <person name="Bartels D."/>
            <person name="Kaiser O."/>
            <person name="Meyer F."/>
            <person name="Puehler A."/>
            <person name="Weisshaar B."/>
            <person name="Wehland J."/>
            <person name="Liang C."/>
            <person name="Dandekar T."/>
            <person name="Lampidis R."/>
            <person name="Kreft J."/>
            <person name="Goebel W."/>
            <person name="Chakraborty T."/>
        </authorList>
    </citation>
    <scope>NUCLEOTIDE SEQUENCE [LARGE SCALE GENOMIC DNA]</scope>
    <source>
        <strain>ATCC 35897 / DSM 20650 / CCUG 15529 / CIP 8149 / NCTC 11857 / SLCC 5334 / V8</strain>
    </source>
</reference>
<evidence type="ECO:0000255" key="1">
    <source>
        <dbReference type="HAMAP-Rule" id="MF_00139"/>
    </source>
</evidence>
<evidence type="ECO:0000255" key="2">
    <source>
        <dbReference type="PROSITE-ProRule" id="PRU01202"/>
    </source>
</evidence>
<accession>A0AJL9</accession>
<comment type="catalytic activity">
    <reaction evidence="1">
        <text>(6R)-10-formyltetrahydrofolate + 5-amino-1-(5-phospho-beta-D-ribosyl)imidazole-4-carboxamide = 5-formamido-1-(5-phospho-D-ribosyl)imidazole-4-carboxamide + (6S)-5,6,7,8-tetrahydrofolate</text>
        <dbReference type="Rhea" id="RHEA:22192"/>
        <dbReference type="ChEBI" id="CHEBI:57453"/>
        <dbReference type="ChEBI" id="CHEBI:58467"/>
        <dbReference type="ChEBI" id="CHEBI:58475"/>
        <dbReference type="ChEBI" id="CHEBI:195366"/>
        <dbReference type="EC" id="2.1.2.3"/>
    </reaction>
</comment>
<comment type="catalytic activity">
    <reaction evidence="1">
        <text>IMP + H2O = 5-formamido-1-(5-phospho-D-ribosyl)imidazole-4-carboxamide</text>
        <dbReference type="Rhea" id="RHEA:18445"/>
        <dbReference type="ChEBI" id="CHEBI:15377"/>
        <dbReference type="ChEBI" id="CHEBI:58053"/>
        <dbReference type="ChEBI" id="CHEBI:58467"/>
        <dbReference type="EC" id="3.5.4.10"/>
    </reaction>
</comment>
<comment type="pathway">
    <text evidence="1">Purine metabolism; IMP biosynthesis via de novo pathway; 5-formamido-1-(5-phospho-D-ribosyl)imidazole-4-carboxamide from 5-amino-1-(5-phospho-D-ribosyl)imidazole-4-carboxamide (10-formyl THF route): step 1/1.</text>
</comment>
<comment type="pathway">
    <text evidence="1">Purine metabolism; IMP biosynthesis via de novo pathway; IMP from 5-formamido-1-(5-phospho-D-ribosyl)imidazole-4-carboxamide: step 1/1.</text>
</comment>
<comment type="domain">
    <text evidence="1">The IMP cyclohydrolase activity resides in the N-terminal region.</text>
</comment>
<comment type="similarity">
    <text evidence="1">Belongs to the PurH family.</text>
</comment>
<sequence>MKRALISVSDKNGIVPFAEKLVELGVEIISTGGTKATFEQAGIPVTGIEDVTKFPEMLDGRVKTLHPAIHGGLLARRDTAEHMEAIAAHDIEPIDLVVVNLYPFQETIQKPGVTLEEAIENIDIGGPSMLRSAAKNYAAVTVVVDAADYDTVLTELKEHGATTFETRQRLAAKVFRHTAAYDAVIAEYLTKITGETFPEKVTFTYNRKQALRYGENPHQDAAFYTEPVALLNSISAAKQLHGKELSYNNIRDADAALKIANEFTEPVAVAVKHMNPCGVGVGENIEEAYLKAYEADETSIFGGIVALNKEVDAKTAEHMSKIFLEIIIAPSFSEEAFTILAKKKNIRLLTVPFAGSVESLEKTSVNGGLLIQASDSFVEDSAGYEVVTEKQPTEAEMKALLAQWKIVKHVKSNAIVVGSDKQTLGIGAGQMNRIGSALIALEQAGEKAKGAVLASDAFFPMDDTVEAAAKAGITAIIQPGGSIKDKESIAMADKYGISMVLTHVRHFKH</sequence>
<dbReference type="EC" id="2.1.2.3" evidence="1"/>
<dbReference type="EC" id="3.5.4.10" evidence="1"/>
<dbReference type="EMBL" id="AM263198">
    <property type="protein sequence ID" value="CAK21201.1"/>
    <property type="molecule type" value="Genomic_DNA"/>
</dbReference>
<dbReference type="RefSeq" id="WP_011702560.1">
    <property type="nucleotide sequence ID" value="NC_008555.1"/>
</dbReference>
<dbReference type="SMR" id="A0AJL9"/>
<dbReference type="STRING" id="386043.lwe1783"/>
<dbReference type="GeneID" id="61189681"/>
<dbReference type="KEGG" id="lwe:lwe1783"/>
<dbReference type="eggNOG" id="COG0138">
    <property type="taxonomic scope" value="Bacteria"/>
</dbReference>
<dbReference type="HOGENOM" id="CLU_016316_5_2_9"/>
<dbReference type="OrthoDB" id="9802065at2"/>
<dbReference type="UniPathway" id="UPA00074">
    <property type="reaction ID" value="UER00133"/>
</dbReference>
<dbReference type="UniPathway" id="UPA00074">
    <property type="reaction ID" value="UER00135"/>
</dbReference>
<dbReference type="Proteomes" id="UP000000779">
    <property type="component" value="Chromosome"/>
</dbReference>
<dbReference type="GO" id="GO:0005829">
    <property type="term" value="C:cytosol"/>
    <property type="evidence" value="ECO:0007669"/>
    <property type="project" value="TreeGrafter"/>
</dbReference>
<dbReference type="GO" id="GO:0003937">
    <property type="term" value="F:IMP cyclohydrolase activity"/>
    <property type="evidence" value="ECO:0007669"/>
    <property type="project" value="UniProtKB-UniRule"/>
</dbReference>
<dbReference type="GO" id="GO:0004643">
    <property type="term" value="F:phosphoribosylaminoimidazolecarboxamide formyltransferase activity"/>
    <property type="evidence" value="ECO:0007669"/>
    <property type="project" value="UniProtKB-UniRule"/>
</dbReference>
<dbReference type="GO" id="GO:0006189">
    <property type="term" value="P:'de novo' IMP biosynthetic process"/>
    <property type="evidence" value="ECO:0007669"/>
    <property type="project" value="UniProtKB-UniRule"/>
</dbReference>
<dbReference type="CDD" id="cd01421">
    <property type="entry name" value="IMPCH"/>
    <property type="match status" value="1"/>
</dbReference>
<dbReference type="FunFam" id="3.40.140.20:FF:000001">
    <property type="entry name" value="Bifunctional purine biosynthesis protein PurH"/>
    <property type="match status" value="1"/>
</dbReference>
<dbReference type="FunFam" id="3.40.140.20:FF:000002">
    <property type="entry name" value="Bifunctional purine biosynthesis protein PurH"/>
    <property type="match status" value="1"/>
</dbReference>
<dbReference type="FunFam" id="3.40.50.1380:FF:000001">
    <property type="entry name" value="Bifunctional purine biosynthesis protein PurH"/>
    <property type="match status" value="1"/>
</dbReference>
<dbReference type="Gene3D" id="3.40.140.20">
    <property type="match status" value="2"/>
</dbReference>
<dbReference type="Gene3D" id="3.40.50.1380">
    <property type="entry name" value="Methylglyoxal synthase-like domain"/>
    <property type="match status" value="1"/>
</dbReference>
<dbReference type="HAMAP" id="MF_00139">
    <property type="entry name" value="PurH"/>
    <property type="match status" value="1"/>
</dbReference>
<dbReference type="InterPro" id="IPR024051">
    <property type="entry name" value="AICAR_Tfase_dup_dom_sf"/>
</dbReference>
<dbReference type="InterPro" id="IPR016193">
    <property type="entry name" value="Cytidine_deaminase-like"/>
</dbReference>
<dbReference type="InterPro" id="IPR011607">
    <property type="entry name" value="MGS-like_dom"/>
</dbReference>
<dbReference type="InterPro" id="IPR036914">
    <property type="entry name" value="MGS-like_dom_sf"/>
</dbReference>
<dbReference type="InterPro" id="IPR002695">
    <property type="entry name" value="PurH-like"/>
</dbReference>
<dbReference type="NCBIfam" id="NF002049">
    <property type="entry name" value="PRK00881.1"/>
    <property type="match status" value="1"/>
</dbReference>
<dbReference type="NCBIfam" id="TIGR00355">
    <property type="entry name" value="purH"/>
    <property type="match status" value="1"/>
</dbReference>
<dbReference type="PANTHER" id="PTHR11692:SF0">
    <property type="entry name" value="BIFUNCTIONAL PURINE BIOSYNTHESIS PROTEIN ATIC"/>
    <property type="match status" value="1"/>
</dbReference>
<dbReference type="PANTHER" id="PTHR11692">
    <property type="entry name" value="BIFUNCTIONAL PURINE BIOSYNTHESIS PROTEIN PURH"/>
    <property type="match status" value="1"/>
</dbReference>
<dbReference type="Pfam" id="PF01808">
    <property type="entry name" value="AICARFT_IMPCHas"/>
    <property type="match status" value="1"/>
</dbReference>
<dbReference type="Pfam" id="PF02142">
    <property type="entry name" value="MGS"/>
    <property type="match status" value="1"/>
</dbReference>
<dbReference type="PIRSF" id="PIRSF000414">
    <property type="entry name" value="AICARFT_IMPCHas"/>
    <property type="match status" value="1"/>
</dbReference>
<dbReference type="SMART" id="SM00798">
    <property type="entry name" value="AICARFT_IMPCHas"/>
    <property type="match status" value="1"/>
</dbReference>
<dbReference type="SMART" id="SM00851">
    <property type="entry name" value="MGS"/>
    <property type="match status" value="1"/>
</dbReference>
<dbReference type="SUPFAM" id="SSF53927">
    <property type="entry name" value="Cytidine deaminase-like"/>
    <property type="match status" value="1"/>
</dbReference>
<dbReference type="SUPFAM" id="SSF52335">
    <property type="entry name" value="Methylglyoxal synthase-like"/>
    <property type="match status" value="1"/>
</dbReference>
<dbReference type="PROSITE" id="PS51855">
    <property type="entry name" value="MGS"/>
    <property type="match status" value="1"/>
</dbReference>
<keyword id="KW-0378">Hydrolase</keyword>
<keyword id="KW-0511">Multifunctional enzyme</keyword>
<keyword id="KW-0658">Purine biosynthesis</keyword>
<keyword id="KW-0808">Transferase</keyword>
<protein>
    <recommendedName>
        <fullName evidence="1">Bifunctional purine biosynthesis protein PurH</fullName>
    </recommendedName>
    <domain>
        <recommendedName>
            <fullName evidence="1">Phosphoribosylaminoimidazolecarboxamide formyltransferase</fullName>
            <ecNumber evidence="1">2.1.2.3</ecNumber>
        </recommendedName>
        <alternativeName>
            <fullName evidence="1">AICAR transformylase</fullName>
        </alternativeName>
    </domain>
    <domain>
        <recommendedName>
            <fullName evidence="1">IMP cyclohydrolase</fullName>
            <ecNumber evidence="1">3.5.4.10</ecNumber>
        </recommendedName>
        <alternativeName>
            <fullName evidence="1">ATIC</fullName>
        </alternativeName>
        <alternativeName>
            <fullName evidence="1">IMP synthase</fullName>
        </alternativeName>
        <alternativeName>
            <fullName evidence="1">Inosinicase</fullName>
        </alternativeName>
    </domain>
</protein>
<name>PUR9_LISW6</name>